<accession>A8FZE2</accession>
<keyword id="KW-0067">ATP-binding</keyword>
<keyword id="KW-0460">Magnesium</keyword>
<keyword id="KW-0547">Nucleotide-binding</keyword>
<keyword id="KW-1185">Reference proteome</keyword>
<keyword id="KW-0808">Transferase</keyword>
<keyword id="KW-0819">tRNA processing</keyword>
<protein>
    <recommendedName>
        <fullName evidence="1">tRNA dimethylallyltransferase 2</fullName>
        <ecNumber evidence="1">2.5.1.75</ecNumber>
    </recommendedName>
    <alternativeName>
        <fullName evidence="1">Dimethylallyl diphosphate:tRNA dimethylallyltransferase 2</fullName>
        <shortName evidence="1">DMAPP:tRNA dimethylallyltransferase 2</shortName>
        <shortName evidence="1">DMATase 2</shortName>
    </alternativeName>
    <alternativeName>
        <fullName evidence="1">Isopentenyl-diphosphate:tRNA isopentenyltransferase 2</fullName>
        <shortName evidence="1">IPP transferase 2</shortName>
        <shortName evidence="1">IPPT 2</shortName>
        <shortName evidence="1">IPTase 2</shortName>
    </alternativeName>
</protein>
<organism>
    <name type="scientific">Shewanella sediminis (strain HAW-EB3)</name>
    <dbReference type="NCBI Taxonomy" id="425104"/>
    <lineage>
        <taxon>Bacteria</taxon>
        <taxon>Pseudomonadati</taxon>
        <taxon>Pseudomonadota</taxon>
        <taxon>Gammaproteobacteria</taxon>
        <taxon>Alteromonadales</taxon>
        <taxon>Shewanellaceae</taxon>
        <taxon>Shewanella</taxon>
    </lineage>
</organism>
<reference key="1">
    <citation type="submission" date="2007-08" db="EMBL/GenBank/DDBJ databases">
        <title>Complete sequence of Shewanella sediminis HAW-EB3.</title>
        <authorList>
            <consortium name="US DOE Joint Genome Institute"/>
            <person name="Copeland A."/>
            <person name="Lucas S."/>
            <person name="Lapidus A."/>
            <person name="Barry K."/>
            <person name="Glavina del Rio T."/>
            <person name="Dalin E."/>
            <person name="Tice H."/>
            <person name="Pitluck S."/>
            <person name="Chertkov O."/>
            <person name="Brettin T."/>
            <person name="Bruce D."/>
            <person name="Detter J.C."/>
            <person name="Han C."/>
            <person name="Schmutz J."/>
            <person name="Larimer F."/>
            <person name="Land M."/>
            <person name="Hauser L."/>
            <person name="Kyrpides N."/>
            <person name="Kim E."/>
            <person name="Zhao J.-S."/>
            <person name="Richardson P."/>
        </authorList>
    </citation>
    <scope>NUCLEOTIDE SEQUENCE [LARGE SCALE GENOMIC DNA]</scope>
    <source>
        <strain>HAW-EB3</strain>
    </source>
</reference>
<dbReference type="EC" id="2.5.1.75" evidence="1"/>
<dbReference type="EMBL" id="CP000821">
    <property type="protein sequence ID" value="ABV38215.1"/>
    <property type="molecule type" value="Genomic_DNA"/>
</dbReference>
<dbReference type="RefSeq" id="WP_012143945.1">
    <property type="nucleotide sequence ID" value="NC_009831.1"/>
</dbReference>
<dbReference type="SMR" id="A8FZE2"/>
<dbReference type="STRING" id="425104.Ssed_3611"/>
<dbReference type="KEGG" id="sse:Ssed_3611"/>
<dbReference type="eggNOG" id="COG0324">
    <property type="taxonomic scope" value="Bacteria"/>
</dbReference>
<dbReference type="HOGENOM" id="CLU_032616_0_1_6"/>
<dbReference type="Proteomes" id="UP000002015">
    <property type="component" value="Chromosome"/>
</dbReference>
<dbReference type="GO" id="GO:0005524">
    <property type="term" value="F:ATP binding"/>
    <property type="evidence" value="ECO:0007669"/>
    <property type="project" value="UniProtKB-UniRule"/>
</dbReference>
<dbReference type="GO" id="GO:0052381">
    <property type="term" value="F:tRNA dimethylallyltransferase activity"/>
    <property type="evidence" value="ECO:0007669"/>
    <property type="project" value="UniProtKB-UniRule"/>
</dbReference>
<dbReference type="GO" id="GO:0006400">
    <property type="term" value="P:tRNA modification"/>
    <property type="evidence" value="ECO:0007669"/>
    <property type="project" value="TreeGrafter"/>
</dbReference>
<dbReference type="Gene3D" id="3.40.50.300">
    <property type="entry name" value="P-loop containing nucleotide triphosphate hydrolases"/>
    <property type="match status" value="1"/>
</dbReference>
<dbReference type="HAMAP" id="MF_00185">
    <property type="entry name" value="IPP_trans"/>
    <property type="match status" value="1"/>
</dbReference>
<dbReference type="InterPro" id="IPR039657">
    <property type="entry name" value="Dimethylallyltransferase"/>
</dbReference>
<dbReference type="InterPro" id="IPR018022">
    <property type="entry name" value="IPT"/>
</dbReference>
<dbReference type="InterPro" id="IPR027417">
    <property type="entry name" value="P-loop_NTPase"/>
</dbReference>
<dbReference type="NCBIfam" id="TIGR00174">
    <property type="entry name" value="miaA"/>
    <property type="match status" value="1"/>
</dbReference>
<dbReference type="PANTHER" id="PTHR11088">
    <property type="entry name" value="TRNA DIMETHYLALLYLTRANSFERASE"/>
    <property type="match status" value="1"/>
</dbReference>
<dbReference type="PANTHER" id="PTHR11088:SF60">
    <property type="entry name" value="TRNA DIMETHYLALLYLTRANSFERASE"/>
    <property type="match status" value="1"/>
</dbReference>
<dbReference type="Pfam" id="PF01715">
    <property type="entry name" value="IPPT"/>
    <property type="match status" value="1"/>
</dbReference>
<dbReference type="SUPFAM" id="SSF52540">
    <property type="entry name" value="P-loop containing nucleoside triphosphate hydrolases"/>
    <property type="match status" value="2"/>
</dbReference>
<comment type="function">
    <text evidence="1">Catalyzes the transfer of a dimethylallyl group onto the adenine at position 37 in tRNAs that read codons beginning with uridine, leading to the formation of N6-(dimethylallyl)adenosine (i(6)A).</text>
</comment>
<comment type="catalytic activity">
    <reaction evidence="1">
        <text>adenosine(37) in tRNA + dimethylallyl diphosphate = N(6)-dimethylallyladenosine(37) in tRNA + diphosphate</text>
        <dbReference type="Rhea" id="RHEA:26482"/>
        <dbReference type="Rhea" id="RHEA-COMP:10162"/>
        <dbReference type="Rhea" id="RHEA-COMP:10375"/>
        <dbReference type="ChEBI" id="CHEBI:33019"/>
        <dbReference type="ChEBI" id="CHEBI:57623"/>
        <dbReference type="ChEBI" id="CHEBI:74411"/>
        <dbReference type="ChEBI" id="CHEBI:74415"/>
        <dbReference type="EC" id="2.5.1.75"/>
    </reaction>
</comment>
<comment type="cofactor">
    <cofactor evidence="1">
        <name>Mg(2+)</name>
        <dbReference type="ChEBI" id="CHEBI:18420"/>
    </cofactor>
</comment>
<comment type="subunit">
    <text evidence="1">Monomer.</text>
</comment>
<comment type="similarity">
    <text evidence="1">Belongs to the IPP transferase family.</text>
</comment>
<proteinExistence type="inferred from homology"/>
<name>MIAA2_SHESH</name>
<evidence type="ECO:0000255" key="1">
    <source>
        <dbReference type="HAMAP-Rule" id="MF_00185"/>
    </source>
</evidence>
<sequence length="301" mass="34578">MKNFNLILVIGATASGKTRLGVELARQLEGEIISADSRQVYKGLDIGSGKDLAEYGEVPHHLIDIVEPGHEYNAFQFQQDFFEAFTYIESRNKQPILVGGTGLYVDAVVSGYEFVQLDKDLALRAELDLQPLEQVQKLLLELDAAQYEKTDLTVRPRLYRAIEIAKNKQTNPKPAKALPEIRPLYFGIQWDRKVLRKRIKTRLKERFEQGMVEEVQGLLDNGVSHEQLEYYGLEYRFVSQYIAGQIGYEEMFDRLNTAICQYAKRQETWFRRIEKHGGKIHWLQGSGDIYQQACEVLADLG</sequence>
<gene>
    <name evidence="1" type="primary">miaA2</name>
    <name type="ordered locus">Ssed_3611</name>
</gene>
<feature type="chain" id="PRO_0000377317" description="tRNA dimethylallyltransferase 2">
    <location>
        <begin position="1"/>
        <end position="301"/>
    </location>
</feature>
<feature type="region of interest" description="Interaction with substrate tRNA" evidence="1">
    <location>
        <begin position="36"/>
        <end position="39"/>
    </location>
</feature>
<feature type="binding site" evidence="1">
    <location>
        <begin position="11"/>
        <end position="18"/>
    </location>
    <ligand>
        <name>ATP</name>
        <dbReference type="ChEBI" id="CHEBI:30616"/>
    </ligand>
</feature>
<feature type="binding site" evidence="1">
    <location>
        <begin position="13"/>
        <end position="18"/>
    </location>
    <ligand>
        <name>substrate</name>
    </ligand>
</feature>
<feature type="site" description="Interaction with substrate tRNA" evidence="1">
    <location>
        <position position="101"/>
    </location>
</feature>